<evidence type="ECO:0000250" key="1"/>
<evidence type="ECO:0000305" key="2"/>
<dbReference type="EC" id="3.6.1.41"/>
<dbReference type="EMBL" id="AL646052">
    <property type="protein sequence ID" value="CAD14211.1"/>
    <property type="molecule type" value="Genomic_DNA"/>
</dbReference>
<dbReference type="RefSeq" id="WP_011000636.1">
    <property type="nucleotide sequence ID" value="NC_003295.1"/>
</dbReference>
<dbReference type="SMR" id="Q8Y1K9"/>
<dbReference type="STRING" id="267608.RSc0681"/>
<dbReference type="EnsemblBacteria" id="CAD14211">
    <property type="protein sequence ID" value="CAD14211"/>
    <property type="gene ID" value="RSc0681"/>
</dbReference>
<dbReference type="KEGG" id="rso:RSc0681"/>
<dbReference type="eggNOG" id="COG0639">
    <property type="taxonomic scope" value="Bacteria"/>
</dbReference>
<dbReference type="HOGENOM" id="CLU_056184_1_0_4"/>
<dbReference type="Proteomes" id="UP000001436">
    <property type="component" value="Chromosome"/>
</dbReference>
<dbReference type="GO" id="GO:0008803">
    <property type="term" value="F:bis(5'-nucleosyl)-tetraphosphatase (symmetrical) activity"/>
    <property type="evidence" value="ECO:0007669"/>
    <property type="project" value="UniProtKB-UniRule"/>
</dbReference>
<dbReference type="CDD" id="cd07422">
    <property type="entry name" value="MPP_ApaH"/>
    <property type="match status" value="1"/>
</dbReference>
<dbReference type="Gene3D" id="3.60.21.10">
    <property type="match status" value="1"/>
</dbReference>
<dbReference type="HAMAP" id="MF_00199">
    <property type="entry name" value="ApaH"/>
    <property type="match status" value="1"/>
</dbReference>
<dbReference type="InterPro" id="IPR004617">
    <property type="entry name" value="ApaH"/>
</dbReference>
<dbReference type="InterPro" id="IPR004843">
    <property type="entry name" value="Calcineurin-like_PHP_ApaH"/>
</dbReference>
<dbReference type="InterPro" id="IPR029052">
    <property type="entry name" value="Metallo-depent_PP-like"/>
</dbReference>
<dbReference type="NCBIfam" id="TIGR00668">
    <property type="entry name" value="apaH"/>
    <property type="match status" value="1"/>
</dbReference>
<dbReference type="NCBIfam" id="NF001204">
    <property type="entry name" value="PRK00166.1"/>
    <property type="match status" value="1"/>
</dbReference>
<dbReference type="PANTHER" id="PTHR40942">
    <property type="match status" value="1"/>
</dbReference>
<dbReference type="PANTHER" id="PTHR40942:SF4">
    <property type="entry name" value="CYTOCHROME C5"/>
    <property type="match status" value="1"/>
</dbReference>
<dbReference type="Pfam" id="PF00149">
    <property type="entry name" value="Metallophos"/>
    <property type="match status" value="1"/>
</dbReference>
<dbReference type="PIRSF" id="PIRSF000903">
    <property type="entry name" value="B5n-ttraPtase_sm"/>
    <property type="match status" value="1"/>
</dbReference>
<dbReference type="SUPFAM" id="SSF56300">
    <property type="entry name" value="Metallo-dependent phosphatases"/>
    <property type="match status" value="1"/>
</dbReference>
<reference key="1">
    <citation type="journal article" date="2002" name="Nature">
        <title>Genome sequence of the plant pathogen Ralstonia solanacearum.</title>
        <authorList>
            <person name="Salanoubat M."/>
            <person name="Genin S."/>
            <person name="Artiguenave F."/>
            <person name="Gouzy J."/>
            <person name="Mangenot S."/>
            <person name="Arlat M."/>
            <person name="Billault A."/>
            <person name="Brottier P."/>
            <person name="Camus J.-C."/>
            <person name="Cattolico L."/>
            <person name="Chandler M."/>
            <person name="Choisne N."/>
            <person name="Claudel-Renard C."/>
            <person name="Cunnac S."/>
            <person name="Demange N."/>
            <person name="Gaspin C."/>
            <person name="Lavie M."/>
            <person name="Moisan A."/>
            <person name="Robert C."/>
            <person name="Saurin W."/>
            <person name="Schiex T."/>
            <person name="Siguier P."/>
            <person name="Thebault P."/>
            <person name="Whalen M."/>
            <person name="Wincker P."/>
            <person name="Levy M."/>
            <person name="Weissenbach J."/>
            <person name="Boucher C.A."/>
        </authorList>
    </citation>
    <scope>NUCLEOTIDE SEQUENCE [LARGE SCALE GENOMIC DNA]</scope>
    <source>
        <strain>ATCC BAA-1114 / GMI1000</strain>
    </source>
</reference>
<name>APAH_RALN1</name>
<organism>
    <name type="scientific">Ralstonia nicotianae (strain ATCC BAA-1114 / GMI1000)</name>
    <name type="common">Ralstonia solanacearum</name>
    <dbReference type="NCBI Taxonomy" id="267608"/>
    <lineage>
        <taxon>Bacteria</taxon>
        <taxon>Pseudomonadati</taxon>
        <taxon>Pseudomonadota</taxon>
        <taxon>Betaproteobacteria</taxon>
        <taxon>Burkholderiales</taxon>
        <taxon>Burkholderiaceae</taxon>
        <taxon>Ralstonia</taxon>
        <taxon>Ralstonia solanacearum species complex</taxon>
    </lineage>
</organism>
<sequence length="283" mass="30660">MTVASIPPHAIGDLQGCCSPLQTLLTALPANAPLRFVGDLVNRGPDSLGTLRRVIMLCEGGRARAVLGNHDIHLLAVAAGVRKLGKRDTLDDILGAPDCDALIHWLRHQPLAIFENGFLMVHAGVLPQWTTGDVLELAGAVERELRSPHWKTFLTDAFGNQPAKWSSDLIGIDRLRLTINALTRLRFCTPDGAMEFETTDADGAPDGHVPWFDVPGRRTRGTPIAFGHWSTRGLVMRDDLLGLDTGCVWGGKLTAARMTLAPAGREVIQVACEQAQDPLAHKK</sequence>
<comment type="function">
    <text evidence="1">Hydrolyzes diadenosine 5',5'''-P1,P4-tetraphosphate to yield ADP.</text>
</comment>
<comment type="catalytic activity">
    <reaction>
        <text>P(1),P(4)-bis(5'-adenosyl) tetraphosphate + H2O = 2 ADP + 2 H(+)</text>
        <dbReference type="Rhea" id="RHEA:24252"/>
        <dbReference type="ChEBI" id="CHEBI:15377"/>
        <dbReference type="ChEBI" id="CHEBI:15378"/>
        <dbReference type="ChEBI" id="CHEBI:58141"/>
        <dbReference type="ChEBI" id="CHEBI:456216"/>
        <dbReference type="EC" id="3.6.1.41"/>
    </reaction>
</comment>
<comment type="similarity">
    <text evidence="2">Belongs to the Ap4A hydrolase family.</text>
</comment>
<accession>Q8Y1K9</accession>
<protein>
    <recommendedName>
        <fullName>Bis(5'-nucleosyl)-tetraphosphatase, symmetrical</fullName>
        <ecNumber>3.6.1.41</ecNumber>
    </recommendedName>
    <alternativeName>
        <fullName>Ap4A hydrolase</fullName>
    </alternativeName>
    <alternativeName>
        <fullName>Diadenosine 5',5'''-P1,P4-tetraphosphate pyrophosphohydrolase</fullName>
    </alternativeName>
    <alternativeName>
        <fullName>Diadenosine tetraphosphatase</fullName>
    </alternativeName>
</protein>
<keyword id="KW-0378">Hydrolase</keyword>
<keyword id="KW-1185">Reference proteome</keyword>
<feature type="chain" id="PRO_0000198007" description="Bis(5'-nucleosyl)-tetraphosphatase, symmetrical">
    <location>
        <begin position="1"/>
        <end position="283"/>
    </location>
</feature>
<proteinExistence type="inferred from homology"/>
<gene>
    <name type="primary">apaH</name>
    <name type="ordered locus">RSc0681</name>
    <name type="ORF">RS01586</name>
</gene>